<sequence>MEILCEDNISLSSIPNSLMQLGDGPRLYHNDFNSRDANTSEASNWTIDAENRTNLSCEGYLPPTCLSILHLQEKNWSALLTTVVIILTIAGNILVIMAVSLEKKLQNATNYFLMSLAIADMLLGFLVMPVSMLTILYGYRWPLPSKLCAIWIYLDVLFSTASIMHLCAISLDRYVAIQNPIHHSRFNSRTKAFLKIIAVWTISVGISMPIPVFGLQDDSKVFKEGSCLLADDNFVLIGSFVAFFIPLTIMVITYFLTIKSLQKEATLCVSDLSTRAKLASFSFLPQSSLSSEKLFQRSIHREPGSYAGRRTMQSISNEQKACKVLGIVFFLFVVMWCPFFITNIMAVICKESCNENVIGALLNVFVWIGYLSSAVNPLVYTLFNKTYRSAFSRYIQCQYKENRKPLQLILVNTIPALAYKSSQLQVGQKKNSQEDAEQTVDDCSMVTLGKQQSEENCTDNIETVNEKVSCV</sequence>
<keyword id="KW-0002">3D-structure</keyword>
<keyword id="KW-0085">Behavior</keyword>
<keyword id="KW-1003">Cell membrane</keyword>
<keyword id="KW-0966">Cell projection</keyword>
<keyword id="KW-0968">Cytoplasmic vesicle</keyword>
<keyword id="KW-1015">Disulfide bond</keyword>
<keyword id="KW-0297">G-protein coupled receptor</keyword>
<keyword id="KW-0325">Glycoprotein</keyword>
<keyword id="KW-0472">Membrane</keyword>
<keyword id="KW-0597">Phosphoprotein</keyword>
<keyword id="KW-0675">Receptor</keyword>
<keyword id="KW-1185">Reference proteome</keyword>
<keyword id="KW-0770">Synapse</keyword>
<keyword id="KW-0807">Transducer</keyword>
<keyword id="KW-0812">Transmembrane</keyword>
<keyword id="KW-1133">Transmembrane helix</keyword>
<proteinExistence type="evidence at protein level"/>
<name>5HT2A_RAT</name>
<reference key="1">
    <citation type="journal article" date="1990" name="Proc. Natl. Acad. Sci. U.S.A.">
        <title>The 5HT2 receptor defines a family of structurally distinct but functionally conserved serotonin receptors.</title>
        <authorList>
            <person name="Julius D."/>
            <person name="Huang K.N."/>
            <person name="Livelli T.J."/>
            <person name="Axel R."/>
            <person name="Jessell T.M."/>
        </authorList>
    </citation>
    <scope>NUCLEOTIDE SEQUENCE [MRNA]</scope>
    <scope>FUNCTION</scope>
    <scope>SUBCELLULAR LOCATION</scope>
    <scope>TISSUE SPECIFICITY</scope>
</reference>
<reference key="2">
    <citation type="journal article" date="1988" name="EMBO J.">
        <title>Structure and functional expression of cloned rat serotonin 5HT-2 receptor.</title>
        <authorList>
            <person name="Pritchett D.B."/>
            <person name="Bach A.W.J."/>
            <person name="Wozny M."/>
            <person name="Taleb O."/>
            <person name="Dal-Toso R."/>
            <person name="Shih J.C."/>
            <person name="Seeburg P.H."/>
        </authorList>
    </citation>
    <scope>NUCLEOTIDE SEQUENCE [MRNA]</scope>
    <scope>FUNCTION</scope>
    <scope>SUBCELLULAR LOCATION</scope>
</reference>
<reference key="3">
    <citation type="journal article" date="1991" name="Genomics">
        <title>The 5-HT2 serotonin receptor gene Htr-2 is tightly linked to Es-10 on mouse chromosome 14.</title>
        <authorList>
            <person name="Liu J."/>
            <person name="Chen Y."/>
            <person name="Kozak C.A."/>
            <person name="Yu L."/>
        </authorList>
    </citation>
    <scope>NUCLEOTIDE SEQUENCE [MRNA]</scope>
</reference>
<reference key="4">
    <citation type="journal article" date="2002" name="Am. J. Physiol.">
        <title>5-HT(2A) receptors: location and functional analysis in intestines of wild-type and 5-HT(2A) knockout mice.</title>
        <authorList>
            <person name="Fiorica-Howells E."/>
            <person name="Hen R."/>
            <person name="Gingrich J."/>
            <person name="Li Z."/>
            <person name="Gershon M.D."/>
        </authorList>
    </citation>
    <scope>SUBCELLULAR LOCATION</scope>
    <scope>TISSUE SPECIFICITY</scope>
</reference>
<gene>
    <name type="primary">Htr2a</name>
    <name type="synonym">Htr2</name>
</gene>
<comment type="function">
    <text evidence="1 2 7 8">G-protein coupled receptor for 5-hydroxytryptamine (serotonin) (PubMed:2300586, PubMed:2854054). Also functions as a receptor for various drugs and psychoactive substances, including mescaline, psilocybin, 1-(2,5-dimethoxy-4-iodophenyl)-2-aminopropane (DOI) and lysergic acid diethylamide (LSD) (By similarity). Ligand binding causes a conformation change that triggers signaling via guanine nucleotide-binding proteins (G proteins) and modulates the activity of downstream effectors (By similarity). HTR2A is coupled to G(q)/G(11) G alpha proteins and activates phospholipase C-beta, releasing diacylglycerol (DAG) and inositol 1,4,5-trisphosphate (IP3) second messengers that modulate the activity of phosphatidylinositol 3-kinase and promote the release of Ca(2+) ions from intracellular stores, respectively (By similarity). Beta-arrestin family members inhibit signaling via G proteins and mediate activation of alternative signaling pathways (By similarity). Affects neural activity, perception, cognition and mood (By similarity). Plays a role in the regulation of behavior, including responses to anxiogenic situations and psychoactive substances (By similarity). Plays a role in intestinal smooth muscle contraction, and may play a role in arterial vasoconstriction (By similarity).</text>
</comment>
<comment type="activity regulation">
    <text evidence="1">G-protein coupled receptor activity is regulated by lipids: oleamide increases HTR2A-mediated activity.</text>
</comment>
<comment type="subunit">
    <text evidence="1">Interacts (via C-terminus) with MPDZ and PATJ. May interact (via C-terminus) with MPP3, PRDX6, DLG4, DLG1, CASK, APBA1 and MAGI2. Interacts with GRM2 and DRD2; this may affect signaling.</text>
</comment>
<comment type="interaction">
    <interactant intactId="EBI-7090176">
        <id>P14842</id>
    </interactant>
    <interactant intactId="EBI-7090147">
        <id>P31421</id>
        <label>Grm2</label>
    </interactant>
    <organismsDiffer>false</organismsDiffer>
    <experiments>3</experiments>
</comment>
<comment type="subcellular location">
    <subcellularLocation>
        <location evidence="6 7 8">Cell membrane</location>
        <topology evidence="9">Multi-pass membrane protein</topology>
    </subcellularLocation>
    <subcellularLocation>
        <location evidence="6">Cell projection</location>
        <location evidence="6">Axon</location>
    </subcellularLocation>
    <subcellularLocation>
        <location evidence="6">Cytoplasmic vesicle</location>
    </subcellularLocation>
    <subcellularLocation>
        <location evidence="6">Membrane</location>
        <location evidence="6">Caveola</location>
    </subcellularLocation>
    <subcellularLocation>
        <location evidence="2">Cell projection</location>
        <location evidence="2">Dendrite</location>
    </subcellularLocation>
    <subcellularLocation>
        <location evidence="6">Presynapse</location>
    </subcellularLocation>
</comment>
<comment type="tissue specificity">
    <text evidence="6 7">Detected in adult intestine, especially in mucosal epithelium, longitudinal and circular layers of muscularis externa and myenteric plexuses. Highly expressed in Paneth cells, and detected at lower levels in enterocytes (at protein level). Detected in brain cortex.</text>
</comment>
<comment type="domain">
    <text evidence="1">The PDZ domain-binding motif is involved in the interaction with PATJ, CASK, APBA1, DLG1 and DLG4.</text>
</comment>
<comment type="similarity">
    <text evidence="5">Belongs to the G-protein coupled receptor 1 family.</text>
</comment>
<comment type="sequence caution" evidence="9">
    <conflict type="frameshift">
        <sequence resource="EMBL-CDS" id="CAA32150"/>
    </conflict>
</comment>
<feature type="chain" id="PRO_0000068951" description="5-hydroxytryptamine receptor 2A">
    <location>
        <begin position="1"/>
        <end position="471"/>
    </location>
</feature>
<feature type="topological domain" description="Extracellular" evidence="1">
    <location>
        <begin position="1"/>
        <end position="80"/>
    </location>
</feature>
<feature type="transmembrane region" description="Helical; Name=1" evidence="1">
    <location>
        <begin position="81"/>
        <end position="97"/>
    </location>
</feature>
<feature type="topological domain" description="Cytoplasmic" evidence="1">
    <location>
        <begin position="98"/>
        <end position="111"/>
    </location>
</feature>
<feature type="transmembrane region" description="Helical; Name=2" evidence="1">
    <location>
        <begin position="112"/>
        <end position="137"/>
    </location>
</feature>
<feature type="topological domain" description="Extracellular" evidence="1">
    <location>
        <begin position="138"/>
        <end position="146"/>
    </location>
</feature>
<feature type="transmembrane region" description="Helical; Name=3" evidence="1">
    <location>
        <begin position="147"/>
        <end position="171"/>
    </location>
</feature>
<feature type="topological domain" description="Cytoplasmic" evidence="1">
    <location>
        <begin position="172"/>
        <end position="191"/>
    </location>
</feature>
<feature type="transmembrane region" description="Helical; Name=4" evidence="1">
    <location>
        <begin position="192"/>
        <end position="215"/>
    </location>
</feature>
<feature type="topological domain" description="Extracellular" evidence="1">
    <location>
        <begin position="216"/>
        <end position="232"/>
    </location>
</feature>
<feature type="transmembrane region" description="Helical; Name=5" evidence="1">
    <location>
        <begin position="233"/>
        <end position="258"/>
    </location>
</feature>
<feature type="topological domain" description="Cytoplasmic" evidence="1">
    <location>
        <begin position="259"/>
        <end position="322"/>
    </location>
</feature>
<feature type="transmembrane region" description="Helical; Name=6" evidence="1">
    <location>
        <begin position="323"/>
        <end position="348"/>
    </location>
</feature>
<feature type="topological domain" description="Extracellular" evidence="1">
    <location>
        <begin position="349"/>
        <end position="356"/>
    </location>
</feature>
<feature type="transmembrane region" description="Helical; Name=7" evidence="1">
    <location>
        <begin position="357"/>
        <end position="382"/>
    </location>
</feature>
<feature type="topological domain" description="Cytoplasmic" evidence="1">
    <location>
        <begin position="383"/>
        <end position="471"/>
    </location>
</feature>
<feature type="short sequence motif" description="DRY motif; important for ligand-induced conformation changes" evidence="3">
    <location>
        <begin position="172"/>
        <end position="174"/>
    </location>
</feature>
<feature type="short sequence motif" description="NPxxY motif; important for ligand-induced conformation changes and signaling" evidence="3">
    <location>
        <begin position="376"/>
        <end position="380"/>
    </location>
</feature>
<feature type="short sequence motif" description="PDZ-binding" evidence="1">
    <location>
        <begin position="469"/>
        <end position="471"/>
    </location>
</feature>
<feature type="binding site" evidence="1">
    <location>
        <position position="155"/>
    </location>
    <ligand>
        <name>serotonin</name>
        <dbReference type="ChEBI" id="CHEBI:350546"/>
    </ligand>
</feature>
<feature type="binding site" evidence="1">
    <location>
        <position position="343"/>
    </location>
    <ligand>
        <name>serotonin</name>
        <dbReference type="ChEBI" id="CHEBI:350546"/>
    </ligand>
</feature>
<feature type="site" description="Hydrophobic barrier that decreases the speed of ligand binding and dissociation" evidence="1">
    <location>
        <position position="229"/>
    </location>
</feature>
<feature type="modified residue" description="Phosphoserine" evidence="1">
    <location>
        <position position="280"/>
    </location>
</feature>
<feature type="glycosylation site" description="N-linked (GlcNAc...) asparagine" evidence="4">
    <location>
        <position position="8"/>
    </location>
</feature>
<feature type="glycosylation site" description="N-linked (GlcNAc...) asparagine" evidence="4">
    <location>
        <position position="38"/>
    </location>
</feature>
<feature type="glycosylation site" description="N-linked (GlcNAc...) asparagine" evidence="4">
    <location>
        <position position="44"/>
    </location>
</feature>
<feature type="glycosylation site" description="N-linked (GlcNAc...) asparagine" evidence="4">
    <location>
        <position position="51"/>
    </location>
</feature>
<feature type="glycosylation site" description="N-linked (GlcNAc...) asparagine" evidence="4">
    <location>
        <position position="54"/>
    </location>
</feature>
<feature type="disulfide bond" evidence="5">
    <location>
        <begin position="148"/>
        <end position="227"/>
    </location>
</feature>
<feature type="disulfide bond" evidence="5">
    <location>
        <begin position="349"/>
        <end position="353"/>
    </location>
</feature>
<feature type="strand" evidence="10">
    <location>
        <begin position="469"/>
        <end position="471"/>
    </location>
</feature>
<protein>
    <recommendedName>
        <fullName>5-hydroxytryptamine receptor 2A</fullName>
        <shortName>5-HT-2</shortName>
        <shortName>5-HT-2A</shortName>
    </recommendedName>
    <alternativeName>
        <fullName>Serotonin receptor 2A</fullName>
    </alternativeName>
</protein>
<evidence type="ECO:0000250" key="1">
    <source>
        <dbReference type="UniProtKB" id="P28223"/>
    </source>
</evidence>
<evidence type="ECO:0000250" key="2">
    <source>
        <dbReference type="UniProtKB" id="P35363"/>
    </source>
</evidence>
<evidence type="ECO:0000250" key="3">
    <source>
        <dbReference type="UniProtKB" id="P41595"/>
    </source>
</evidence>
<evidence type="ECO:0000255" key="4"/>
<evidence type="ECO:0000255" key="5">
    <source>
        <dbReference type="PROSITE-ProRule" id="PRU00521"/>
    </source>
</evidence>
<evidence type="ECO:0000269" key="6">
    <source>
    </source>
</evidence>
<evidence type="ECO:0000269" key="7">
    <source>
    </source>
</evidence>
<evidence type="ECO:0000269" key="8">
    <source>
    </source>
</evidence>
<evidence type="ECO:0000305" key="9"/>
<evidence type="ECO:0007829" key="10">
    <source>
        <dbReference type="PDB" id="4OAJ"/>
    </source>
</evidence>
<accession>P14842</accession>
<dbReference type="EMBL" id="M30705">
    <property type="protein sequence ID" value="AAA42178.1"/>
    <property type="molecule type" value="mRNA"/>
</dbReference>
<dbReference type="EMBL" id="X13971">
    <property type="protein sequence ID" value="CAA32150.1"/>
    <property type="status" value="ALT_FRAME"/>
    <property type="molecule type" value="mRNA"/>
</dbReference>
<dbReference type="EMBL" id="M64867">
    <property type="status" value="NOT_ANNOTATED_CDS"/>
    <property type="molecule type" value="mRNA"/>
</dbReference>
<dbReference type="PIR" id="A34863">
    <property type="entry name" value="A34863"/>
</dbReference>
<dbReference type="PIR" id="S02011">
    <property type="entry name" value="S02011"/>
</dbReference>
<dbReference type="RefSeq" id="NP_058950.1">
    <property type="nucleotide sequence ID" value="NM_017254.1"/>
</dbReference>
<dbReference type="PDB" id="4OAJ">
    <property type="method" value="X-ray"/>
    <property type="resolution" value="2.30 A"/>
    <property type="chains" value="B=465-471"/>
</dbReference>
<dbReference type="PDBsum" id="4OAJ"/>
<dbReference type="SMR" id="P14842"/>
<dbReference type="BioGRID" id="248227">
    <property type="interactions" value="2"/>
</dbReference>
<dbReference type="CORUM" id="P14842"/>
<dbReference type="DIP" id="DIP-57661N"/>
<dbReference type="FunCoup" id="P14842">
    <property type="interactions" value="403"/>
</dbReference>
<dbReference type="IntAct" id="P14842">
    <property type="interactions" value="4"/>
</dbReference>
<dbReference type="MINT" id="P14842"/>
<dbReference type="STRING" id="10116.ENSRNOP00000013408"/>
<dbReference type="BindingDB" id="P14842"/>
<dbReference type="ChEMBL" id="CHEMBL322"/>
<dbReference type="DrugCentral" id="P14842"/>
<dbReference type="GuidetoPHARMACOLOGY" id="6"/>
<dbReference type="GlyCosmos" id="P14842">
    <property type="glycosylation" value="5 sites, No reported glycans"/>
</dbReference>
<dbReference type="GlyGen" id="P14842">
    <property type="glycosylation" value="5 sites"/>
</dbReference>
<dbReference type="iPTMnet" id="P14842"/>
<dbReference type="PhosphoSitePlus" id="P14842"/>
<dbReference type="PaxDb" id="10116-ENSRNOP00000013408"/>
<dbReference type="Ensembl" id="ENSRNOT00000013408.7">
    <property type="protein sequence ID" value="ENSRNOP00000013408.4"/>
    <property type="gene ID" value="ENSRNOG00000010063.7"/>
</dbReference>
<dbReference type="GeneID" id="29595"/>
<dbReference type="KEGG" id="rno:29595"/>
<dbReference type="UCSC" id="RGD:61800">
    <property type="organism name" value="rat"/>
</dbReference>
<dbReference type="AGR" id="RGD:61800"/>
<dbReference type="CTD" id="3356"/>
<dbReference type="RGD" id="61800">
    <property type="gene designation" value="Htr2a"/>
</dbReference>
<dbReference type="eggNOG" id="KOG3656">
    <property type="taxonomic scope" value="Eukaryota"/>
</dbReference>
<dbReference type="GeneTree" id="ENSGT01050000244937"/>
<dbReference type="HOGENOM" id="CLU_009579_11_3_1"/>
<dbReference type="InParanoid" id="P14842"/>
<dbReference type="OMA" id="MVTIGIH"/>
<dbReference type="OrthoDB" id="420518at2759"/>
<dbReference type="PhylomeDB" id="P14842"/>
<dbReference type="TreeFam" id="TF316350"/>
<dbReference type="Reactome" id="R-RNO-390666">
    <property type="pathway name" value="Serotonin receptors"/>
</dbReference>
<dbReference type="Reactome" id="R-RNO-416476">
    <property type="pathway name" value="G alpha (q) signalling events"/>
</dbReference>
<dbReference type="EvolutionaryTrace" id="P14842"/>
<dbReference type="PRO" id="PR:P14842"/>
<dbReference type="Proteomes" id="UP000002494">
    <property type="component" value="Chromosome 15"/>
</dbReference>
<dbReference type="Bgee" id="ENSRNOG00000010063">
    <property type="expression patterns" value="Expressed in frontal cortex and 5 other cell types or tissues"/>
</dbReference>
<dbReference type="GO" id="GO:0030424">
    <property type="term" value="C:axon"/>
    <property type="evidence" value="ECO:0007669"/>
    <property type="project" value="UniProtKB-SubCell"/>
</dbReference>
<dbReference type="GO" id="GO:0005901">
    <property type="term" value="C:caveola"/>
    <property type="evidence" value="ECO:0007669"/>
    <property type="project" value="UniProtKB-SubCell"/>
</dbReference>
<dbReference type="GO" id="GO:0070852">
    <property type="term" value="C:cell body fiber"/>
    <property type="evidence" value="ECO:0000314"/>
    <property type="project" value="RGD"/>
</dbReference>
<dbReference type="GO" id="GO:0031410">
    <property type="term" value="C:cytoplasmic vesicle"/>
    <property type="evidence" value="ECO:0007669"/>
    <property type="project" value="UniProtKB-KW"/>
</dbReference>
<dbReference type="GO" id="GO:0030425">
    <property type="term" value="C:dendrite"/>
    <property type="evidence" value="ECO:0000314"/>
    <property type="project" value="RGD"/>
</dbReference>
<dbReference type="GO" id="GO:0043198">
    <property type="term" value="C:dendritic shaft"/>
    <property type="evidence" value="ECO:0000314"/>
    <property type="project" value="RGD"/>
</dbReference>
<dbReference type="GO" id="GO:0098666">
    <property type="term" value="C:G protein-coupled serotonin receptor complex"/>
    <property type="evidence" value="ECO:0000266"/>
    <property type="project" value="RGD"/>
</dbReference>
<dbReference type="GO" id="GO:0098978">
    <property type="term" value="C:glutamatergic synapse"/>
    <property type="evidence" value="ECO:0000314"/>
    <property type="project" value="SynGO"/>
</dbReference>
<dbReference type="GO" id="GO:0005883">
    <property type="term" value="C:neurofilament"/>
    <property type="evidence" value="ECO:0000314"/>
    <property type="project" value="RGD"/>
</dbReference>
<dbReference type="GO" id="GO:0043025">
    <property type="term" value="C:neuronal cell body"/>
    <property type="evidence" value="ECO:0000314"/>
    <property type="project" value="RGD"/>
</dbReference>
<dbReference type="GO" id="GO:0005886">
    <property type="term" value="C:plasma membrane"/>
    <property type="evidence" value="ECO:0000314"/>
    <property type="project" value="RGD"/>
</dbReference>
<dbReference type="GO" id="GO:0045211">
    <property type="term" value="C:postsynaptic membrane"/>
    <property type="evidence" value="ECO:0000314"/>
    <property type="project" value="SynGO"/>
</dbReference>
<dbReference type="GO" id="GO:0042734">
    <property type="term" value="C:presynaptic membrane"/>
    <property type="evidence" value="ECO:0000314"/>
    <property type="project" value="SynGO"/>
</dbReference>
<dbReference type="GO" id="GO:0071886">
    <property type="term" value="F:1-(4-iodo-2,5-dimethoxyphenyl)propan-2-amine binding"/>
    <property type="evidence" value="ECO:0000266"/>
    <property type="project" value="RGD"/>
</dbReference>
<dbReference type="GO" id="GO:0004993">
    <property type="term" value="F:G protein-coupled serotonin receptor activity"/>
    <property type="evidence" value="ECO:0000266"/>
    <property type="project" value="RGD"/>
</dbReference>
<dbReference type="GO" id="GO:0001587">
    <property type="term" value="F:Gq/11-coupled serotonin receptor activity"/>
    <property type="evidence" value="ECO:0000266"/>
    <property type="project" value="RGD"/>
</dbReference>
<dbReference type="GO" id="GO:0042802">
    <property type="term" value="F:identical protein binding"/>
    <property type="evidence" value="ECO:0000266"/>
    <property type="project" value="RGD"/>
</dbReference>
<dbReference type="GO" id="GO:0030594">
    <property type="term" value="F:neurotransmitter receptor activity"/>
    <property type="evidence" value="ECO:0000318"/>
    <property type="project" value="GO_Central"/>
</dbReference>
<dbReference type="GO" id="GO:0030296">
    <property type="term" value="F:protein tyrosine kinase activator activity"/>
    <property type="evidence" value="ECO:0000266"/>
    <property type="project" value="RGD"/>
</dbReference>
<dbReference type="GO" id="GO:0044877">
    <property type="term" value="F:protein-containing complex binding"/>
    <property type="evidence" value="ECO:0000353"/>
    <property type="project" value="RGD"/>
</dbReference>
<dbReference type="GO" id="GO:0051378">
    <property type="term" value="F:serotonin binding"/>
    <property type="evidence" value="ECO:0000266"/>
    <property type="project" value="RGD"/>
</dbReference>
<dbReference type="GO" id="GO:0099589">
    <property type="term" value="F:serotonin receptor activity"/>
    <property type="evidence" value="ECO:0000266"/>
    <property type="project" value="RGD"/>
</dbReference>
<dbReference type="GO" id="GO:0014824">
    <property type="term" value="P:artery smooth muscle contraction"/>
    <property type="evidence" value="ECO:0000315"/>
    <property type="project" value="RGD"/>
</dbReference>
<dbReference type="GO" id="GO:0048148">
    <property type="term" value="P:behavioral response to cocaine"/>
    <property type="evidence" value="ECO:0000314"/>
    <property type="project" value="RGD"/>
</dbReference>
<dbReference type="GO" id="GO:0007268">
    <property type="term" value="P:chemical synaptic transmission"/>
    <property type="evidence" value="ECO:0000318"/>
    <property type="project" value="GO_Central"/>
</dbReference>
<dbReference type="GO" id="GO:0050966">
    <property type="term" value="P:detection of mechanical stimulus involved in sensory perception of pain"/>
    <property type="evidence" value="ECO:0000315"/>
    <property type="project" value="RGD"/>
</dbReference>
<dbReference type="GO" id="GO:0050965">
    <property type="term" value="P:detection of temperature stimulus involved in sensory perception of pain"/>
    <property type="evidence" value="ECO:0000315"/>
    <property type="project" value="RGD"/>
</dbReference>
<dbReference type="GO" id="GO:0007187">
    <property type="term" value="P:G protein-coupled receptor signaling pathway, coupled to cyclic nucleotide second messenger"/>
    <property type="evidence" value="ECO:0000318"/>
    <property type="project" value="GO_Central"/>
</dbReference>
<dbReference type="GO" id="GO:0098664">
    <property type="term" value="P:G protein-coupled serotonin receptor signaling pathway"/>
    <property type="evidence" value="ECO:0000266"/>
    <property type="project" value="RGD"/>
</dbReference>
<dbReference type="GO" id="GO:0006096">
    <property type="term" value="P:glycolytic process"/>
    <property type="evidence" value="ECO:0000266"/>
    <property type="project" value="RGD"/>
</dbReference>
<dbReference type="GO" id="GO:0006874">
    <property type="term" value="P:intracellular calcium ion homeostasis"/>
    <property type="evidence" value="ECO:0000266"/>
    <property type="project" value="RGD"/>
</dbReference>
<dbReference type="GO" id="GO:0007613">
    <property type="term" value="P:memory"/>
    <property type="evidence" value="ECO:0000315"/>
    <property type="project" value="RGD"/>
</dbReference>
<dbReference type="GO" id="GO:0043267">
    <property type="term" value="P:negative regulation of potassium ion transport"/>
    <property type="evidence" value="ECO:0000315"/>
    <property type="project" value="RGD"/>
</dbReference>
<dbReference type="GO" id="GO:0051967">
    <property type="term" value="P:negative regulation of synaptic transmission, glutamatergic"/>
    <property type="evidence" value="ECO:0000315"/>
    <property type="project" value="RGD"/>
</dbReference>
<dbReference type="GO" id="GO:0007208">
    <property type="term" value="P:phospholipase C-activating serotonin receptor signaling pathway"/>
    <property type="evidence" value="ECO:0000314"/>
    <property type="project" value="RGD"/>
</dbReference>
<dbReference type="GO" id="GO:0008284">
    <property type="term" value="P:positive regulation of cell population proliferation"/>
    <property type="evidence" value="ECO:0000315"/>
    <property type="project" value="RGD"/>
</dbReference>
<dbReference type="GO" id="GO:0002720">
    <property type="term" value="P:positive regulation of cytokine production involved in immune response"/>
    <property type="evidence" value="ECO:0000315"/>
    <property type="project" value="RGD"/>
</dbReference>
<dbReference type="GO" id="GO:0007204">
    <property type="term" value="P:positive regulation of cytosolic calcium ion concentration"/>
    <property type="evidence" value="ECO:0000314"/>
    <property type="project" value="RGD"/>
</dbReference>
<dbReference type="GO" id="GO:2000573">
    <property type="term" value="P:positive regulation of DNA biosynthetic process"/>
    <property type="evidence" value="ECO:0000315"/>
    <property type="project" value="RGD"/>
</dbReference>
<dbReference type="GO" id="GO:0070374">
    <property type="term" value="P:positive regulation of ERK1 and ERK2 cascade"/>
    <property type="evidence" value="ECO:0000315"/>
    <property type="project" value="RGD"/>
</dbReference>
<dbReference type="GO" id="GO:1900119">
    <property type="term" value="P:positive regulation of execution phase of apoptosis"/>
    <property type="evidence" value="ECO:0000314"/>
    <property type="project" value="RGD"/>
</dbReference>
<dbReference type="GO" id="GO:0045600">
    <property type="term" value="P:positive regulation of fat cell differentiation"/>
    <property type="evidence" value="ECO:0000266"/>
    <property type="project" value="RGD"/>
</dbReference>
<dbReference type="GO" id="GO:0045821">
    <property type="term" value="P:positive regulation of glycolytic process"/>
    <property type="evidence" value="ECO:0000266"/>
    <property type="project" value="RGD"/>
</dbReference>
<dbReference type="GO" id="GO:0031652">
    <property type="term" value="P:positive regulation of heat generation"/>
    <property type="evidence" value="ECO:0000315"/>
    <property type="project" value="RGD"/>
</dbReference>
<dbReference type="GO" id="GO:0050729">
    <property type="term" value="P:positive regulation of inflammatory response"/>
    <property type="evidence" value="ECO:0000315"/>
    <property type="project" value="RGD"/>
</dbReference>
<dbReference type="GO" id="GO:0043525">
    <property type="term" value="P:positive regulation of neuron apoptotic process"/>
    <property type="evidence" value="ECO:0000315"/>
    <property type="project" value="RGD"/>
</dbReference>
<dbReference type="GO" id="GO:0010513">
    <property type="term" value="P:positive regulation of phosphatidylinositol biosynthetic process"/>
    <property type="evidence" value="ECO:0000266"/>
    <property type="project" value="RGD"/>
</dbReference>
<dbReference type="GO" id="GO:1901731">
    <property type="term" value="P:positive regulation of platelet aggregation"/>
    <property type="evidence" value="ECO:0000315"/>
    <property type="project" value="RGD"/>
</dbReference>
<dbReference type="GO" id="GO:0045907">
    <property type="term" value="P:positive regulation of vasoconstriction"/>
    <property type="evidence" value="ECO:0000315"/>
    <property type="project" value="RGD"/>
</dbReference>
<dbReference type="GO" id="GO:0099171">
    <property type="term" value="P:presynaptic modulation of chemical synaptic transmission"/>
    <property type="evidence" value="ECO:0000314"/>
    <property type="project" value="SynGO"/>
</dbReference>
<dbReference type="GO" id="GO:0044380">
    <property type="term" value="P:protein localization to cytoskeleton"/>
    <property type="evidence" value="ECO:0000266"/>
    <property type="project" value="RGD"/>
</dbReference>
<dbReference type="GO" id="GO:0014059">
    <property type="term" value="P:regulation of dopamine secretion"/>
    <property type="evidence" value="ECO:0000315"/>
    <property type="project" value="RGD"/>
</dbReference>
<dbReference type="GO" id="GO:0051209">
    <property type="term" value="P:release of sequestered calcium ion into cytosol"/>
    <property type="evidence" value="ECO:0000266"/>
    <property type="project" value="RGD"/>
</dbReference>
<dbReference type="GO" id="GO:0042220">
    <property type="term" value="P:response to cocaine"/>
    <property type="evidence" value="ECO:0000270"/>
    <property type="project" value="RGD"/>
</dbReference>
<dbReference type="GO" id="GO:0009410">
    <property type="term" value="P:response to xenobiotic stimulus"/>
    <property type="evidence" value="ECO:0000315"/>
    <property type="project" value="RGD"/>
</dbReference>
<dbReference type="GO" id="GO:0046960">
    <property type="term" value="P:sensitization"/>
    <property type="evidence" value="ECO:0000315"/>
    <property type="project" value="RGD"/>
</dbReference>
<dbReference type="GO" id="GO:0050951">
    <property type="term" value="P:sensory perception of temperature stimulus"/>
    <property type="evidence" value="ECO:0000315"/>
    <property type="project" value="RGD"/>
</dbReference>
<dbReference type="GO" id="GO:0007210">
    <property type="term" value="P:serotonin receptor signaling pathway"/>
    <property type="evidence" value="ECO:0000318"/>
    <property type="project" value="GO_Central"/>
</dbReference>
<dbReference type="GO" id="GO:0001659">
    <property type="term" value="P:temperature homeostasis"/>
    <property type="evidence" value="ECO:0000315"/>
    <property type="project" value="RGD"/>
</dbReference>
<dbReference type="GO" id="GO:0014832">
    <property type="term" value="P:urinary bladder smooth muscle contraction"/>
    <property type="evidence" value="ECO:0000315"/>
    <property type="project" value="RGD"/>
</dbReference>
<dbReference type="CDD" id="cd15304">
    <property type="entry name" value="7tmA_5-HT2A"/>
    <property type="match status" value="1"/>
</dbReference>
<dbReference type="Gene3D" id="1.20.1070.10">
    <property type="entry name" value="Rhodopsin 7-helix transmembrane proteins"/>
    <property type="match status" value="1"/>
</dbReference>
<dbReference type="InterPro" id="IPR000455">
    <property type="entry name" value="5HT2A_rcpt"/>
</dbReference>
<dbReference type="InterPro" id="IPR002231">
    <property type="entry name" value="5HT_rcpt"/>
</dbReference>
<dbReference type="InterPro" id="IPR000276">
    <property type="entry name" value="GPCR_Rhodpsn"/>
</dbReference>
<dbReference type="InterPro" id="IPR017452">
    <property type="entry name" value="GPCR_Rhodpsn_7TM"/>
</dbReference>
<dbReference type="PANTHER" id="PTHR24247">
    <property type="entry name" value="5-HYDROXYTRYPTAMINE RECEPTOR"/>
    <property type="match status" value="1"/>
</dbReference>
<dbReference type="PANTHER" id="PTHR24247:SF30">
    <property type="entry name" value="5-HYDROXYTRYPTAMINE RECEPTOR 2A"/>
    <property type="match status" value="1"/>
</dbReference>
<dbReference type="Pfam" id="PF00001">
    <property type="entry name" value="7tm_1"/>
    <property type="match status" value="1"/>
</dbReference>
<dbReference type="PRINTS" id="PR00516">
    <property type="entry name" value="5HT2ARECEPTR"/>
</dbReference>
<dbReference type="PRINTS" id="PR01101">
    <property type="entry name" value="5HTRECEPTOR"/>
</dbReference>
<dbReference type="PRINTS" id="PR00237">
    <property type="entry name" value="GPCRRHODOPSN"/>
</dbReference>
<dbReference type="SMART" id="SM01381">
    <property type="entry name" value="7TM_GPCR_Srsx"/>
    <property type="match status" value="1"/>
</dbReference>
<dbReference type="SUPFAM" id="SSF81321">
    <property type="entry name" value="Family A G protein-coupled receptor-like"/>
    <property type="match status" value="1"/>
</dbReference>
<dbReference type="PROSITE" id="PS00237">
    <property type="entry name" value="G_PROTEIN_RECEP_F1_1"/>
    <property type="match status" value="1"/>
</dbReference>
<dbReference type="PROSITE" id="PS50262">
    <property type="entry name" value="G_PROTEIN_RECEP_F1_2"/>
    <property type="match status" value="1"/>
</dbReference>
<organism>
    <name type="scientific">Rattus norvegicus</name>
    <name type="common">Rat</name>
    <dbReference type="NCBI Taxonomy" id="10116"/>
    <lineage>
        <taxon>Eukaryota</taxon>
        <taxon>Metazoa</taxon>
        <taxon>Chordata</taxon>
        <taxon>Craniata</taxon>
        <taxon>Vertebrata</taxon>
        <taxon>Euteleostomi</taxon>
        <taxon>Mammalia</taxon>
        <taxon>Eutheria</taxon>
        <taxon>Euarchontoglires</taxon>
        <taxon>Glires</taxon>
        <taxon>Rodentia</taxon>
        <taxon>Myomorpha</taxon>
        <taxon>Muroidea</taxon>
        <taxon>Muridae</taxon>
        <taxon>Murinae</taxon>
        <taxon>Rattus</taxon>
    </lineage>
</organism>